<feature type="chain" id="PRO_0000247304" description="Probable calcium-transporting ATPase 8, plasma membrane-type">
    <location>
        <begin position="1"/>
        <end position="1017"/>
    </location>
</feature>
<feature type="topological domain" description="Cytoplasmic" evidence="2">
    <location>
        <begin position="1"/>
        <end position="153"/>
    </location>
</feature>
<feature type="transmembrane region" description="Helical" evidence="2">
    <location>
        <begin position="154"/>
        <end position="174"/>
    </location>
</feature>
<feature type="transmembrane region" description="Helical" evidence="2">
    <location>
        <begin position="177"/>
        <end position="197"/>
    </location>
</feature>
<feature type="topological domain" description="Cytoplasmic" evidence="2">
    <location>
        <begin position="198"/>
        <end position="228"/>
    </location>
</feature>
<feature type="transmembrane region" description="Helical" evidence="2">
    <location>
        <begin position="229"/>
        <end position="249"/>
    </location>
</feature>
<feature type="transmembrane region" description="Helical" evidence="2">
    <location>
        <begin position="331"/>
        <end position="351"/>
    </location>
</feature>
<feature type="topological domain" description="Cytoplasmic" evidence="2">
    <location>
        <begin position="352"/>
        <end position="384"/>
    </location>
</feature>
<feature type="transmembrane region" description="Helical" evidence="2">
    <location>
        <begin position="385"/>
        <end position="405"/>
    </location>
</feature>
<feature type="transmembrane region" description="Helical" evidence="2">
    <location>
        <begin position="803"/>
        <end position="823"/>
    </location>
</feature>
<feature type="topological domain" description="Cytoplasmic" evidence="2">
    <location>
        <begin position="824"/>
        <end position="825"/>
    </location>
</feature>
<feature type="transmembrane region" description="Helical" evidence="2">
    <location>
        <begin position="826"/>
        <end position="846"/>
    </location>
</feature>
<feature type="transmembrane region" description="Helical" evidence="2">
    <location>
        <begin position="875"/>
        <end position="895"/>
    </location>
</feature>
<feature type="topological domain" description="Cytoplasmic" evidence="2">
    <location>
        <begin position="896"/>
        <end position="938"/>
    </location>
</feature>
<feature type="transmembrane region" description="Helical" evidence="2">
    <location>
        <begin position="939"/>
        <end position="959"/>
    </location>
</feature>
<feature type="transmembrane region" description="Helical" evidence="2">
    <location>
        <begin position="973"/>
        <end position="993"/>
    </location>
</feature>
<feature type="topological domain" description="Cytoplasmic" evidence="2">
    <location>
        <begin position="994"/>
        <end position="1017"/>
    </location>
</feature>
<feature type="active site" description="4-aspartylphosphate intermediate" evidence="1">
    <location>
        <position position="434"/>
    </location>
</feature>
<feature type="binding site" evidence="1">
    <location>
        <position position="736"/>
    </location>
    <ligand>
        <name>Mg(2+)</name>
        <dbReference type="ChEBI" id="CHEBI:18420"/>
    </ligand>
</feature>
<feature type="binding site" evidence="1">
    <location>
        <position position="740"/>
    </location>
    <ligand>
        <name>Mg(2+)</name>
        <dbReference type="ChEBI" id="CHEBI:18420"/>
    </ligand>
</feature>
<accession>Q2RAS0</accession>
<gene>
    <name evidence="3" type="primary">ACA8</name>
    <name type="ordered locus">Os11g0140400</name>
    <name type="ordered locus">LOC_Os11g04460</name>
</gene>
<protein>
    <recommendedName>
        <fullName evidence="4">Probable calcium-transporting ATPase 8, plasma membrane-type</fullName>
        <shortName evidence="3">OsACA8</shortName>
        <ecNumber>7.2.2.10</ecNumber>
    </recommendedName>
    <alternativeName>
        <fullName evidence="4">Ca(2+)-ATPase isoform 8</fullName>
    </alternativeName>
</protein>
<reference key="1">
    <citation type="journal article" date="2005" name="BMC Biol.">
        <title>The sequence of rice chromosomes 11 and 12, rich in disease resistance genes and recent gene duplications.</title>
        <authorList>
            <consortium name="The rice chromosomes 11 and 12 sequencing consortia"/>
        </authorList>
    </citation>
    <scope>NUCLEOTIDE SEQUENCE [LARGE SCALE GENOMIC DNA]</scope>
    <source>
        <strain>cv. Nipponbare</strain>
    </source>
</reference>
<reference key="2">
    <citation type="journal article" date="2005" name="Nature">
        <title>The map-based sequence of the rice genome.</title>
        <authorList>
            <consortium name="International rice genome sequencing project (IRGSP)"/>
        </authorList>
    </citation>
    <scope>NUCLEOTIDE SEQUENCE [LARGE SCALE GENOMIC DNA]</scope>
    <source>
        <strain>cv. Nipponbare</strain>
    </source>
</reference>
<reference key="3">
    <citation type="journal article" date="2008" name="Nucleic Acids Res.">
        <title>The rice annotation project database (RAP-DB): 2008 update.</title>
        <authorList>
            <consortium name="The rice annotation project (RAP)"/>
        </authorList>
    </citation>
    <scope>GENOME REANNOTATION</scope>
    <source>
        <strain>cv. Nipponbare</strain>
    </source>
</reference>
<reference key="4">
    <citation type="journal article" date="2013" name="Rice">
        <title>Improvement of the Oryza sativa Nipponbare reference genome using next generation sequence and optical map data.</title>
        <authorList>
            <person name="Kawahara Y."/>
            <person name="de la Bastide M."/>
            <person name="Hamilton J.P."/>
            <person name="Kanamori H."/>
            <person name="McCombie W.R."/>
            <person name="Ouyang S."/>
            <person name="Schwartz D.C."/>
            <person name="Tanaka T."/>
            <person name="Wu J."/>
            <person name="Zhou S."/>
            <person name="Childs K.L."/>
            <person name="Davidson R.M."/>
            <person name="Lin H."/>
            <person name="Quesada-Ocampo L."/>
            <person name="Vaillancourt B."/>
            <person name="Sakai H."/>
            <person name="Lee S.S."/>
            <person name="Kim J."/>
            <person name="Numa H."/>
            <person name="Itoh T."/>
            <person name="Buell C.R."/>
            <person name="Matsumoto T."/>
        </authorList>
    </citation>
    <scope>GENOME REANNOTATION</scope>
    <source>
        <strain>cv. Nipponbare</strain>
    </source>
</reference>
<reference key="5">
    <citation type="journal article" date="2014" name="FEBS J.">
        <title>Genome-wide expressional and functional analysis of calcium transport elements during abiotic stress and development in rice.</title>
        <authorList>
            <person name="Singh A."/>
            <person name="Kanwar P."/>
            <person name="Yadav A.K."/>
            <person name="Mishra M."/>
            <person name="Jha S.K."/>
            <person name="Baranwal V."/>
            <person name="Pandey A."/>
            <person name="Kapoor S."/>
            <person name="Tyagi A.K."/>
            <person name="Pandey G.K."/>
        </authorList>
    </citation>
    <scope>GENE FAMILY</scope>
    <scope>NOMENCLATURE</scope>
</reference>
<keyword id="KW-0067">ATP-binding</keyword>
<keyword id="KW-0106">Calcium</keyword>
<keyword id="KW-0109">Calcium transport</keyword>
<keyword id="KW-0112">Calmodulin-binding</keyword>
<keyword id="KW-0406">Ion transport</keyword>
<keyword id="KW-0460">Magnesium</keyword>
<keyword id="KW-0472">Membrane</keyword>
<keyword id="KW-0479">Metal-binding</keyword>
<keyword id="KW-0547">Nucleotide-binding</keyword>
<keyword id="KW-0597">Phosphoprotein</keyword>
<keyword id="KW-1185">Reference proteome</keyword>
<keyword id="KW-1278">Translocase</keyword>
<keyword id="KW-0812">Transmembrane</keyword>
<keyword id="KW-1133">Transmembrane helix</keyword>
<keyword id="KW-0813">Transport</keyword>
<sequence>MEKLDRYLQEHFDVPAKNPSEEAQRRWRQAVGTIVKNRRRRFRWVPDLDRRSLDKAKVRSTQEKIRVALYVQQAALIFSDDELALITSKHDSKALKMHGGVDGISKKVRSSFDHGICASDLDTRQNIYGVNRYAEKPSRSFWMFVWDAFQDMTLIILMVCALLSVAVGLATEGWPKGMYDGLGIILSIFLVVMVTAVSDYKQSLQFKELDNEKKKIFIHVTRDGRRQKISIYDLVVGDIVHLSIGDQVPADGLYIHGYSLLIDESSLSGESDPVYVSQDKPFILAGTKVQDGSAKMIVTAVGMRTEWGKLMSTLSEGGEDETPLQVKLNGVATVIGKIGLVFAILTFLVLLVRFLIDKGMTVGLLKWYSTDALTIVNYFATAVTIIVVAVPEGLPLAVTLSLAFAMKKLMNDKALVRHLSACETMGSAGTICTDKTGTLTTNYMVVDKIWISEVSKSVTSNTISGELNSVVSSRTLSLLLQGIFENTSAEVVKEKDGKQTVLGTPTERAILEFGLGLEGVHDAEYSACTKVKVEPFNSVKKKMAVLISLPSGTSRWFCKGASEIILQMCDMMVDGDGNAIPLSEAQRKNILDTINSFASDALRTLCLAYKEVDDDIDDNADSPTSGFTLIAIFGIKDPVRPGVKDAVKTCMSAGITVRMVTGDNINTAKAIAKECGILTEDGVAIEGPEFHSKSPEEMRDLIPNIQVMARSLPLDKHTLVTNLRGMFDEVVSVTGDGTNDAPALHEADIGLAMGIAGTEVAKESADVIVLDDNFTTIINVARWGRAVYINIQKFVQFQLTVNIVALVINFVSACITGSAPLTAVQLLWVNMIMDTLGALALATEPPNDEMMKRPPVRKGESFITKVMWRNIMGQSLYQLFVLGALMFGGESLLNIKGADSKSIINTLIFNSFVFCQVFNEINSREMQKINVFRGIISNWIFIAVIAATVAFQVVIIEFLGTFASTVPLNWQHWLLSVGLGSISLIVGVILKCIPVGSGETSATPNGYRPLANGPDDI</sequence>
<name>ACA8_ORYSJ</name>
<comment type="function">
    <text evidence="1">This magnesium-dependent enzyme catalyzes the hydrolysis of ATP coupled with the translocation of calcium from the cytosol out of the cell, into the endoplasmic reticulum, or into organelles.</text>
</comment>
<comment type="catalytic activity">
    <reaction>
        <text>Ca(2+)(in) + ATP + H2O = Ca(2+)(out) + ADP + phosphate + H(+)</text>
        <dbReference type="Rhea" id="RHEA:18105"/>
        <dbReference type="ChEBI" id="CHEBI:15377"/>
        <dbReference type="ChEBI" id="CHEBI:15378"/>
        <dbReference type="ChEBI" id="CHEBI:29108"/>
        <dbReference type="ChEBI" id="CHEBI:30616"/>
        <dbReference type="ChEBI" id="CHEBI:43474"/>
        <dbReference type="ChEBI" id="CHEBI:456216"/>
        <dbReference type="EC" id="7.2.2.10"/>
    </reaction>
</comment>
<comment type="activity regulation">
    <text evidence="1">Activated by calmodulin.</text>
</comment>
<comment type="subcellular location">
    <subcellularLocation>
        <location evidence="1">Membrane</location>
        <topology evidence="1">Multi-pass membrane protein</topology>
    </subcellularLocation>
</comment>
<comment type="domain">
    <text evidence="1">The N-terminus contains an autoinhibitory calmodulin-binding domain, which binds calmodulin in a calcium-dependent fashion.</text>
</comment>
<comment type="similarity">
    <text evidence="4">Belongs to the cation transport ATPase (P-type) (TC 3.A.3) family. Type IIB subfamily.</text>
</comment>
<proteinExistence type="inferred from homology"/>
<evidence type="ECO:0000250" key="1"/>
<evidence type="ECO:0000255" key="2"/>
<evidence type="ECO:0000303" key="3">
    <source>
    </source>
</evidence>
<evidence type="ECO:0000305" key="4"/>
<organism>
    <name type="scientific">Oryza sativa subsp. japonica</name>
    <name type="common">Rice</name>
    <dbReference type="NCBI Taxonomy" id="39947"/>
    <lineage>
        <taxon>Eukaryota</taxon>
        <taxon>Viridiplantae</taxon>
        <taxon>Streptophyta</taxon>
        <taxon>Embryophyta</taxon>
        <taxon>Tracheophyta</taxon>
        <taxon>Spermatophyta</taxon>
        <taxon>Magnoliopsida</taxon>
        <taxon>Liliopsida</taxon>
        <taxon>Poales</taxon>
        <taxon>Poaceae</taxon>
        <taxon>BOP clade</taxon>
        <taxon>Oryzoideae</taxon>
        <taxon>Oryzeae</taxon>
        <taxon>Oryzinae</taxon>
        <taxon>Oryza</taxon>
        <taxon>Oryza sativa</taxon>
    </lineage>
</organism>
<dbReference type="EC" id="7.2.2.10"/>
<dbReference type="EMBL" id="DP000010">
    <property type="protein sequence ID" value="ABA91401.1"/>
    <property type="molecule type" value="Genomic_DNA"/>
</dbReference>
<dbReference type="EMBL" id="AP008217">
    <property type="status" value="NOT_ANNOTATED_CDS"/>
    <property type="molecule type" value="Genomic_DNA"/>
</dbReference>
<dbReference type="EMBL" id="AP014967">
    <property type="status" value="NOT_ANNOTATED_CDS"/>
    <property type="molecule type" value="Genomic_DNA"/>
</dbReference>
<dbReference type="RefSeq" id="XP_015617350.1">
    <property type="nucleotide sequence ID" value="XM_015761864.1"/>
</dbReference>
<dbReference type="SMR" id="Q2RAS0"/>
<dbReference type="FunCoup" id="Q2RAS0">
    <property type="interactions" value="2758"/>
</dbReference>
<dbReference type="STRING" id="39947.Q2RAS0"/>
<dbReference type="PaxDb" id="39947-Q2RAS0"/>
<dbReference type="InParanoid" id="Q2RAS0"/>
<dbReference type="OrthoDB" id="3352408at2759"/>
<dbReference type="Proteomes" id="UP000000763">
    <property type="component" value="Chromosome 11"/>
</dbReference>
<dbReference type="Proteomes" id="UP000059680">
    <property type="component" value="Chromosome 11"/>
</dbReference>
<dbReference type="GO" id="GO:0043231">
    <property type="term" value="C:intracellular membrane-bounded organelle"/>
    <property type="evidence" value="ECO:0000318"/>
    <property type="project" value="GO_Central"/>
</dbReference>
<dbReference type="GO" id="GO:0005886">
    <property type="term" value="C:plasma membrane"/>
    <property type="evidence" value="ECO:0000318"/>
    <property type="project" value="GO_Central"/>
</dbReference>
<dbReference type="GO" id="GO:0005524">
    <property type="term" value="F:ATP binding"/>
    <property type="evidence" value="ECO:0007669"/>
    <property type="project" value="UniProtKB-KW"/>
</dbReference>
<dbReference type="GO" id="GO:0016887">
    <property type="term" value="F:ATP hydrolysis activity"/>
    <property type="evidence" value="ECO:0007669"/>
    <property type="project" value="InterPro"/>
</dbReference>
<dbReference type="GO" id="GO:0005516">
    <property type="term" value="F:calmodulin binding"/>
    <property type="evidence" value="ECO:0007669"/>
    <property type="project" value="UniProtKB-KW"/>
</dbReference>
<dbReference type="GO" id="GO:0046872">
    <property type="term" value="F:metal ion binding"/>
    <property type="evidence" value="ECO:0007669"/>
    <property type="project" value="UniProtKB-KW"/>
</dbReference>
<dbReference type="GO" id="GO:0005388">
    <property type="term" value="F:P-type calcium transporter activity"/>
    <property type="evidence" value="ECO:0000318"/>
    <property type="project" value="GO_Central"/>
</dbReference>
<dbReference type="CDD" id="cd02081">
    <property type="entry name" value="P-type_ATPase_Ca_PMCA-like"/>
    <property type="match status" value="1"/>
</dbReference>
<dbReference type="FunFam" id="1.20.1110.10:FF:000036">
    <property type="entry name" value="Calcium-transporting ATPase"/>
    <property type="match status" value="1"/>
</dbReference>
<dbReference type="FunFam" id="1.20.1110.10:FF:000039">
    <property type="entry name" value="Calcium-transporting ATPase"/>
    <property type="match status" value="1"/>
</dbReference>
<dbReference type="FunFam" id="1.20.5.170:FF:000026">
    <property type="entry name" value="Calcium-transporting ATPase"/>
    <property type="match status" value="1"/>
</dbReference>
<dbReference type="FunFam" id="2.70.150.10:FF:000006">
    <property type="entry name" value="Calcium-transporting ATPase"/>
    <property type="match status" value="1"/>
</dbReference>
<dbReference type="FunFam" id="3.40.1110.10:FF:000011">
    <property type="entry name" value="Calcium-transporting ATPase"/>
    <property type="match status" value="1"/>
</dbReference>
<dbReference type="FunFam" id="3.40.50.1000:FF:000011">
    <property type="entry name" value="Calcium-transporting ATPase"/>
    <property type="match status" value="1"/>
</dbReference>
<dbReference type="Gene3D" id="1.20.5.170">
    <property type="match status" value="1"/>
</dbReference>
<dbReference type="Gene3D" id="3.40.1110.10">
    <property type="entry name" value="Calcium-transporting ATPase, cytoplasmic domain N"/>
    <property type="match status" value="1"/>
</dbReference>
<dbReference type="Gene3D" id="2.70.150.10">
    <property type="entry name" value="Calcium-transporting ATPase, cytoplasmic transduction domain A"/>
    <property type="match status" value="1"/>
</dbReference>
<dbReference type="Gene3D" id="1.20.1110.10">
    <property type="entry name" value="Calcium-transporting ATPase, transmembrane domain"/>
    <property type="match status" value="1"/>
</dbReference>
<dbReference type="Gene3D" id="3.40.50.1000">
    <property type="entry name" value="HAD superfamily/HAD-like"/>
    <property type="match status" value="1"/>
</dbReference>
<dbReference type="InterPro" id="IPR006068">
    <property type="entry name" value="ATPase_P-typ_cation-transptr_C"/>
</dbReference>
<dbReference type="InterPro" id="IPR004014">
    <property type="entry name" value="ATPase_P-typ_cation-transptr_N"/>
</dbReference>
<dbReference type="InterPro" id="IPR023299">
    <property type="entry name" value="ATPase_P-typ_cyto_dom_N"/>
</dbReference>
<dbReference type="InterPro" id="IPR018303">
    <property type="entry name" value="ATPase_P-typ_P_site"/>
</dbReference>
<dbReference type="InterPro" id="IPR023298">
    <property type="entry name" value="ATPase_P-typ_TM_dom_sf"/>
</dbReference>
<dbReference type="InterPro" id="IPR008250">
    <property type="entry name" value="ATPase_P-typ_transduc_dom_A_sf"/>
</dbReference>
<dbReference type="InterPro" id="IPR024750">
    <property type="entry name" value="Ca_ATPase_N_dom"/>
</dbReference>
<dbReference type="InterPro" id="IPR036412">
    <property type="entry name" value="HAD-like_sf"/>
</dbReference>
<dbReference type="InterPro" id="IPR023214">
    <property type="entry name" value="HAD_sf"/>
</dbReference>
<dbReference type="InterPro" id="IPR006408">
    <property type="entry name" value="P-type_ATPase_IIB"/>
</dbReference>
<dbReference type="InterPro" id="IPR001757">
    <property type="entry name" value="P_typ_ATPase"/>
</dbReference>
<dbReference type="InterPro" id="IPR044492">
    <property type="entry name" value="P_typ_ATPase_HD_dom"/>
</dbReference>
<dbReference type="NCBIfam" id="TIGR01517">
    <property type="entry name" value="ATPase-IIB_Ca"/>
    <property type="match status" value="1"/>
</dbReference>
<dbReference type="NCBIfam" id="TIGR01494">
    <property type="entry name" value="ATPase_P-type"/>
    <property type="match status" value="2"/>
</dbReference>
<dbReference type="PANTHER" id="PTHR24093:SF462">
    <property type="entry name" value="CALCIUM-TRANSPORTING ATPASE 11, PLASMA MEMBRANE-TYPE-RELATED"/>
    <property type="match status" value="1"/>
</dbReference>
<dbReference type="PANTHER" id="PTHR24093">
    <property type="entry name" value="CATION TRANSPORTING ATPASE"/>
    <property type="match status" value="1"/>
</dbReference>
<dbReference type="Pfam" id="PF12515">
    <property type="entry name" value="CaATP_NAI"/>
    <property type="match status" value="1"/>
</dbReference>
<dbReference type="Pfam" id="PF13246">
    <property type="entry name" value="Cation_ATPase"/>
    <property type="match status" value="1"/>
</dbReference>
<dbReference type="Pfam" id="PF00689">
    <property type="entry name" value="Cation_ATPase_C"/>
    <property type="match status" value="1"/>
</dbReference>
<dbReference type="Pfam" id="PF00690">
    <property type="entry name" value="Cation_ATPase_N"/>
    <property type="match status" value="1"/>
</dbReference>
<dbReference type="Pfam" id="PF00122">
    <property type="entry name" value="E1-E2_ATPase"/>
    <property type="match status" value="1"/>
</dbReference>
<dbReference type="Pfam" id="PF00702">
    <property type="entry name" value="Hydrolase"/>
    <property type="match status" value="1"/>
</dbReference>
<dbReference type="PRINTS" id="PR00119">
    <property type="entry name" value="CATATPASE"/>
</dbReference>
<dbReference type="PRINTS" id="PR00120">
    <property type="entry name" value="HATPASE"/>
</dbReference>
<dbReference type="SFLD" id="SFLDS00003">
    <property type="entry name" value="Haloacid_Dehalogenase"/>
    <property type="match status" value="1"/>
</dbReference>
<dbReference type="SFLD" id="SFLDF00027">
    <property type="entry name" value="p-type_atpase"/>
    <property type="match status" value="1"/>
</dbReference>
<dbReference type="SMART" id="SM00831">
    <property type="entry name" value="Cation_ATPase_N"/>
    <property type="match status" value="1"/>
</dbReference>
<dbReference type="SUPFAM" id="SSF81653">
    <property type="entry name" value="Calcium ATPase, transduction domain A"/>
    <property type="match status" value="1"/>
</dbReference>
<dbReference type="SUPFAM" id="SSF81665">
    <property type="entry name" value="Calcium ATPase, transmembrane domain M"/>
    <property type="match status" value="1"/>
</dbReference>
<dbReference type="SUPFAM" id="SSF56784">
    <property type="entry name" value="HAD-like"/>
    <property type="match status" value="1"/>
</dbReference>
<dbReference type="SUPFAM" id="SSF81660">
    <property type="entry name" value="Metal cation-transporting ATPase, ATP-binding domain N"/>
    <property type="match status" value="1"/>
</dbReference>
<dbReference type="PROSITE" id="PS00154">
    <property type="entry name" value="ATPASE_E1_E2"/>
    <property type="match status" value="1"/>
</dbReference>